<keyword id="KW-0378">Hydrolase</keyword>
<keyword id="KW-0546">Nucleotide metabolism</keyword>
<keyword id="KW-0547">Nucleotide-binding</keyword>
<keyword id="KW-1185">Reference proteome</keyword>
<organism>
    <name type="scientific">Staphylothermus marinus (strain ATCC 43588 / DSM 3639 / JCM 9404 / F1)</name>
    <dbReference type="NCBI Taxonomy" id="399550"/>
    <lineage>
        <taxon>Archaea</taxon>
        <taxon>Thermoproteota</taxon>
        <taxon>Thermoprotei</taxon>
        <taxon>Desulfurococcales</taxon>
        <taxon>Desulfurococcaceae</taxon>
        <taxon>Staphylothermus</taxon>
    </lineage>
</organism>
<protein>
    <recommendedName>
        <fullName evidence="1">dCTP deaminase</fullName>
        <ecNumber evidence="1">3.5.4.13</ecNumber>
    </recommendedName>
    <alternativeName>
        <fullName evidence="1">Deoxycytidine triphosphate deaminase</fullName>
    </alternativeName>
</protein>
<accession>A3DNG5</accession>
<gene>
    <name evidence="1" type="primary">dcd</name>
    <name type="ordered locus">Smar_1077</name>
</gene>
<comment type="function">
    <text evidence="1">Catalyzes the deamination of dCTP to dUTP.</text>
</comment>
<comment type="catalytic activity">
    <reaction evidence="1">
        <text>dCTP + H2O + H(+) = dUTP + NH4(+)</text>
        <dbReference type="Rhea" id="RHEA:22680"/>
        <dbReference type="ChEBI" id="CHEBI:15377"/>
        <dbReference type="ChEBI" id="CHEBI:15378"/>
        <dbReference type="ChEBI" id="CHEBI:28938"/>
        <dbReference type="ChEBI" id="CHEBI:61481"/>
        <dbReference type="ChEBI" id="CHEBI:61555"/>
        <dbReference type="EC" id="3.5.4.13"/>
    </reaction>
</comment>
<comment type="pathway">
    <text evidence="1">Pyrimidine metabolism; dUMP biosynthesis; dUMP from dCTP (dUTP route): step 1/2.</text>
</comment>
<comment type="subunit">
    <text evidence="1">Homotrimer.</text>
</comment>
<comment type="similarity">
    <text evidence="1">Belongs to the dCTP deaminase family.</text>
</comment>
<feature type="chain" id="PRO_1000009823" description="dCTP deaminase">
    <location>
        <begin position="1"/>
        <end position="176"/>
    </location>
</feature>
<feature type="active site" description="Proton donor/acceptor" evidence="1">
    <location>
        <position position="128"/>
    </location>
</feature>
<feature type="binding site" evidence="1">
    <location>
        <begin position="102"/>
        <end position="107"/>
    </location>
    <ligand>
        <name>dCTP</name>
        <dbReference type="ChEBI" id="CHEBI:61481"/>
    </ligand>
</feature>
<feature type="binding site" evidence="1">
    <location>
        <position position="118"/>
    </location>
    <ligand>
        <name>dCTP</name>
        <dbReference type="ChEBI" id="CHEBI:61481"/>
    </ligand>
</feature>
<feature type="binding site" evidence="1">
    <location>
        <position position="160"/>
    </location>
    <ligand>
        <name>dCTP</name>
        <dbReference type="ChEBI" id="CHEBI:61481"/>
    </ligand>
</feature>
<feature type="binding site" evidence="1">
    <location>
        <position position="166"/>
    </location>
    <ligand>
        <name>dCTP</name>
        <dbReference type="ChEBI" id="CHEBI:61481"/>
    </ligand>
</feature>
<feature type="binding site" evidence="1">
    <location>
        <position position="167"/>
    </location>
    <ligand>
        <name>dCTP</name>
        <dbReference type="ChEBI" id="CHEBI:61481"/>
    </ligand>
</feature>
<reference key="1">
    <citation type="journal article" date="2009" name="BMC Genomics">
        <title>The complete genome sequence of Staphylothermus marinus reveals differences in sulfur metabolism among heterotrophic Crenarchaeota.</title>
        <authorList>
            <person name="Anderson I.J."/>
            <person name="Dharmarajan L."/>
            <person name="Rodriguez J."/>
            <person name="Hooper S."/>
            <person name="Porat I."/>
            <person name="Ulrich L.E."/>
            <person name="Elkins J.G."/>
            <person name="Mavromatis K."/>
            <person name="Sun H."/>
            <person name="Land M."/>
            <person name="Lapidus A."/>
            <person name="Lucas S."/>
            <person name="Barry K."/>
            <person name="Huber H."/>
            <person name="Zhulin I.B."/>
            <person name="Whitman W.B."/>
            <person name="Mukhopadhyay B."/>
            <person name="Woese C."/>
            <person name="Bristow J."/>
            <person name="Kyrpides N."/>
        </authorList>
    </citation>
    <scope>NUCLEOTIDE SEQUENCE [LARGE SCALE GENOMIC DNA]</scope>
    <source>
        <strain>ATCC 43588 / DSM 3639 / JCM 9404 / F1</strain>
    </source>
</reference>
<reference key="2">
    <citation type="journal article" date="2009" name="Stand. Genomic Sci.">
        <title>Complete genome sequence of Staphylothermus marinus Stetter and Fiala 1986 type strain F1.</title>
        <authorList>
            <person name="Anderson I.J."/>
            <person name="Sun H."/>
            <person name="Lapidus A."/>
            <person name="Copeland A."/>
            <person name="Glavina Del Rio T."/>
            <person name="Tice H."/>
            <person name="Dalin E."/>
            <person name="Lucas S."/>
            <person name="Barry K."/>
            <person name="Land M."/>
            <person name="Richardson P."/>
            <person name="Huber H."/>
            <person name="Kyrpides N.C."/>
        </authorList>
    </citation>
    <scope>NUCLEOTIDE SEQUENCE [LARGE SCALE GENOMIC DNA]</scope>
    <source>
        <strain>ATCC 43588 / DSM 3639 / JCM 9404 / F1</strain>
    </source>
</reference>
<sequence>MILSDWDIRVYLEKKLLVINPLFPDTIRENGVDLRFGYQFCRFKKDQNIIVDTARDPVDKTLVCEETDENNGIIINPLEHVLATTLEWVEMPNDLIGFVNLRSTFARYSLYIPPTIIDAGFKGNITIELIGGSIPVKVYPKQRFLHVIFARTSSPVYRPYSGKYQKQRGVTPPKPD</sequence>
<evidence type="ECO:0000255" key="1">
    <source>
        <dbReference type="HAMAP-Rule" id="MF_00146"/>
    </source>
</evidence>
<dbReference type="EC" id="3.5.4.13" evidence="1"/>
<dbReference type="EMBL" id="CP000575">
    <property type="protein sequence ID" value="ABN70175.1"/>
    <property type="molecule type" value="Genomic_DNA"/>
</dbReference>
<dbReference type="RefSeq" id="WP_011839366.1">
    <property type="nucleotide sequence ID" value="NC_009033.1"/>
</dbReference>
<dbReference type="SMR" id="A3DNG5"/>
<dbReference type="STRING" id="399550.Smar_1077"/>
<dbReference type="GeneID" id="4907072"/>
<dbReference type="KEGG" id="smr:Smar_1077"/>
<dbReference type="eggNOG" id="arCOG04048">
    <property type="taxonomic scope" value="Archaea"/>
</dbReference>
<dbReference type="HOGENOM" id="CLU_087476_3_0_2"/>
<dbReference type="OrthoDB" id="33242at2157"/>
<dbReference type="UniPathway" id="UPA00610">
    <property type="reaction ID" value="UER00665"/>
</dbReference>
<dbReference type="Proteomes" id="UP000000254">
    <property type="component" value="Chromosome"/>
</dbReference>
<dbReference type="GO" id="GO:0008829">
    <property type="term" value="F:dCTP deaminase activity"/>
    <property type="evidence" value="ECO:0007669"/>
    <property type="project" value="UniProtKB-UniRule"/>
</dbReference>
<dbReference type="GO" id="GO:0000166">
    <property type="term" value="F:nucleotide binding"/>
    <property type="evidence" value="ECO:0007669"/>
    <property type="project" value="UniProtKB-KW"/>
</dbReference>
<dbReference type="GO" id="GO:0006226">
    <property type="term" value="P:dUMP biosynthetic process"/>
    <property type="evidence" value="ECO:0007669"/>
    <property type="project" value="UniProtKB-UniPathway"/>
</dbReference>
<dbReference type="GO" id="GO:0006229">
    <property type="term" value="P:dUTP biosynthetic process"/>
    <property type="evidence" value="ECO:0007669"/>
    <property type="project" value="UniProtKB-UniRule"/>
</dbReference>
<dbReference type="CDD" id="cd07557">
    <property type="entry name" value="trimeric_dUTPase"/>
    <property type="match status" value="1"/>
</dbReference>
<dbReference type="Gene3D" id="2.70.40.10">
    <property type="match status" value="1"/>
</dbReference>
<dbReference type="HAMAP" id="MF_00146">
    <property type="entry name" value="dCTP_deaminase"/>
    <property type="match status" value="1"/>
</dbReference>
<dbReference type="InterPro" id="IPR011962">
    <property type="entry name" value="dCTP_deaminase"/>
</dbReference>
<dbReference type="InterPro" id="IPR036157">
    <property type="entry name" value="dUTPase-like_sf"/>
</dbReference>
<dbReference type="InterPro" id="IPR033704">
    <property type="entry name" value="dUTPase_trimeric"/>
</dbReference>
<dbReference type="NCBIfam" id="TIGR02274">
    <property type="entry name" value="dCTP_deam"/>
    <property type="match status" value="1"/>
</dbReference>
<dbReference type="PANTHER" id="PTHR42680">
    <property type="entry name" value="DCTP DEAMINASE"/>
    <property type="match status" value="1"/>
</dbReference>
<dbReference type="PANTHER" id="PTHR42680:SF3">
    <property type="entry name" value="DCTP DEAMINASE"/>
    <property type="match status" value="1"/>
</dbReference>
<dbReference type="Pfam" id="PF22769">
    <property type="entry name" value="DCD"/>
    <property type="match status" value="1"/>
</dbReference>
<dbReference type="SUPFAM" id="SSF51283">
    <property type="entry name" value="dUTPase-like"/>
    <property type="match status" value="1"/>
</dbReference>
<proteinExistence type="inferred from homology"/>
<name>DCD_STAMF</name>